<proteinExistence type="inferred from homology"/>
<feature type="chain" id="PRO_0000157049" description="Thiamine-phosphate synthase">
    <location>
        <begin position="1"/>
        <end position="212"/>
    </location>
</feature>
<feature type="binding site" evidence="1">
    <location>
        <begin position="40"/>
        <end position="44"/>
    </location>
    <ligand>
        <name>4-amino-2-methyl-5-(diphosphooxymethyl)pyrimidine</name>
        <dbReference type="ChEBI" id="CHEBI:57841"/>
    </ligand>
</feature>
<feature type="binding site" evidence="1">
    <location>
        <position position="75"/>
    </location>
    <ligand>
        <name>4-amino-2-methyl-5-(diphosphooxymethyl)pyrimidine</name>
        <dbReference type="ChEBI" id="CHEBI:57841"/>
    </ligand>
</feature>
<feature type="binding site" evidence="1">
    <location>
        <position position="76"/>
    </location>
    <ligand>
        <name>Mg(2+)</name>
        <dbReference type="ChEBI" id="CHEBI:18420"/>
    </ligand>
</feature>
<feature type="binding site" evidence="1">
    <location>
        <position position="95"/>
    </location>
    <ligand>
        <name>Mg(2+)</name>
        <dbReference type="ChEBI" id="CHEBI:18420"/>
    </ligand>
</feature>
<feature type="binding site" evidence="1">
    <location>
        <position position="113"/>
    </location>
    <ligand>
        <name>4-amino-2-methyl-5-(diphosphooxymethyl)pyrimidine</name>
        <dbReference type="ChEBI" id="CHEBI:57841"/>
    </ligand>
</feature>
<feature type="binding site" evidence="1">
    <location>
        <begin position="139"/>
        <end position="141"/>
    </location>
    <ligand>
        <name>2-[(2R,5Z)-2-carboxy-4-methylthiazol-5(2H)-ylidene]ethyl phosphate</name>
        <dbReference type="ChEBI" id="CHEBI:62899"/>
    </ligand>
</feature>
<feature type="binding site" evidence="1">
    <location>
        <position position="142"/>
    </location>
    <ligand>
        <name>4-amino-2-methyl-5-(diphosphooxymethyl)pyrimidine</name>
        <dbReference type="ChEBI" id="CHEBI:57841"/>
    </ligand>
</feature>
<feature type="binding site" evidence="1">
    <location>
        <position position="171"/>
    </location>
    <ligand>
        <name>2-[(2R,5Z)-2-carboxy-4-methylthiazol-5(2H)-ylidene]ethyl phosphate</name>
        <dbReference type="ChEBI" id="CHEBI:62899"/>
    </ligand>
</feature>
<feature type="binding site" evidence="1">
    <location>
        <begin position="191"/>
        <end position="192"/>
    </location>
    <ligand>
        <name>2-[(2R,5Z)-2-carboxy-4-methylthiazol-5(2H)-ylidene]ethyl phosphate</name>
        <dbReference type="ChEBI" id="CHEBI:62899"/>
    </ligand>
</feature>
<gene>
    <name evidence="1" type="primary">thiE</name>
    <name type="ordered locus">SERP1698</name>
</gene>
<organism>
    <name type="scientific">Staphylococcus epidermidis (strain ATCC 35984 / DSM 28319 / BCRC 17069 / CCUG 31568 / BM 3577 / RP62A)</name>
    <dbReference type="NCBI Taxonomy" id="176279"/>
    <lineage>
        <taxon>Bacteria</taxon>
        <taxon>Bacillati</taxon>
        <taxon>Bacillota</taxon>
        <taxon>Bacilli</taxon>
        <taxon>Bacillales</taxon>
        <taxon>Staphylococcaceae</taxon>
        <taxon>Staphylococcus</taxon>
    </lineage>
</organism>
<evidence type="ECO:0000255" key="1">
    <source>
        <dbReference type="HAMAP-Rule" id="MF_00097"/>
    </source>
</evidence>
<evidence type="ECO:0000305" key="2"/>
<name>THIE_STAEQ</name>
<protein>
    <recommendedName>
        <fullName evidence="1">Thiamine-phosphate synthase</fullName>
        <shortName evidence="1">TP synthase</shortName>
        <shortName evidence="1">TPS</shortName>
        <ecNumber evidence="1">2.5.1.3</ecNumber>
    </recommendedName>
    <alternativeName>
        <fullName evidence="1">Thiamine-phosphate pyrophosphorylase</fullName>
        <shortName evidence="1">TMP pyrophosphorylase</shortName>
        <shortName evidence="1">TMP-PPase</shortName>
    </alternativeName>
</protein>
<sequence>MFDSKQLSVYFICGTQDIPKNKSIEQVLKEALEAGITLYQFREKGPNALKGEKKKQLALKLKQLCHSYHVPMIVNDDVQLAQEINADGIHVGQDDMEIQQFASQFKNKIIGLSVGNLKEYQQSDLSKVDYIGVGPMYTTSSKDDASKPVGPSMISQLRLYIHDFPIVAIGGINETNVQPIVDEGADGISVISAITRSTNIDKTVKYFLRYFT</sequence>
<comment type="function">
    <text evidence="1">Condenses 4-methyl-5-(beta-hydroxyethyl)thiazole monophosphate (THZ-P) and 2-methyl-4-amino-5-hydroxymethyl pyrimidine pyrophosphate (HMP-PP) to form thiamine monophosphate (TMP).</text>
</comment>
<comment type="catalytic activity">
    <reaction evidence="1">
        <text>2-[(2R,5Z)-2-carboxy-4-methylthiazol-5(2H)-ylidene]ethyl phosphate + 4-amino-2-methyl-5-(diphosphooxymethyl)pyrimidine + 2 H(+) = thiamine phosphate + CO2 + diphosphate</text>
        <dbReference type="Rhea" id="RHEA:47844"/>
        <dbReference type="ChEBI" id="CHEBI:15378"/>
        <dbReference type="ChEBI" id="CHEBI:16526"/>
        <dbReference type="ChEBI" id="CHEBI:33019"/>
        <dbReference type="ChEBI" id="CHEBI:37575"/>
        <dbReference type="ChEBI" id="CHEBI:57841"/>
        <dbReference type="ChEBI" id="CHEBI:62899"/>
        <dbReference type="EC" id="2.5.1.3"/>
    </reaction>
</comment>
<comment type="catalytic activity">
    <reaction evidence="1">
        <text>2-(2-carboxy-4-methylthiazol-5-yl)ethyl phosphate + 4-amino-2-methyl-5-(diphosphooxymethyl)pyrimidine + 2 H(+) = thiamine phosphate + CO2 + diphosphate</text>
        <dbReference type="Rhea" id="RHEA:47848"/>
        <dbReference type="ChEBI" id="CHEBI:15378"/>
        <dbReference type="ChEBI" id="CHEBI:16526"/>
        <dbReference type="ChEBI" id="CHEBI:33019"/>
        <dbReference type="ChEBI" id="CHEBI:37575"/>
        <dbReference type="ChEBI" id="CHEBI:57841"/>
        <dbReference type="ChEBI" id="CHEBI:62890"/>
        <dbReference type="EC" id="2.5.1.3"/>
    </reaction>
</comment>
<comment type="catalytic activity">
    <reaction evidence="1">
        <text>4-methyl-5-(2-phosphooxyethyl)-thiazole + 4-amino-2-methyl-5-(diphosphooxymethyl)pyrimidine + H(+) = thiamine phosphate + diphosphate</text>
        <dbReference type="Rhea" id="RHEA:22328"/>
        <dbReference type="ChEBI" id="CHEBI:15378"/>
        <dbReference type="ChEBI" id="CHEBI:33019"/>
        <dbReference type="ChEBI" id="CHEBI:37575"/>
        <dbReference type="ChEBI" id="CHEBI:57841"/>
        <dbReference type="ChEBI" id="CHEBI:58296"/>
        <dbReference type="EC" id="2.5.1.3"/>
    </reaction>
</comment>
<comment type="cofactor">
    <cofactor evidence="1">
        <name>Mg(2+)</name>
        <dbReference type="ChEBI" id="CHEBI:18420"/>
    </cofactor>
    <text evidence="1">Binds 1 Mg(2+) ion per subunit.</text>
</comment>
<comment type="pathway">
    <text evidence="1">Cofactor biosynthesis; thiamine diphosphate biosynthesis; thiamine phosphate from 4-amino-2-methyl-5-diphosphomethylpyrimidine and 4-methyl-5-(2-phosphoethyl)-thiazole: step 1/1.</text>
</comment>
<comment type="similarity">
    <text evidence="1">Belongs to the thiamine-phosphate synthase family.</text>
</comment>
<comment type="sequence caution" evidence="2">
    <conflict type="erroneous initiation">
        <sequence resource="EMBL-CDS" id="AAW55076"/>
    </conflict>
</comment>
<reference key="1">
    <citation type="journal article" date="2005" name="J. Bacteriol.">
        <title>Insights on evolution of virulence and resistance from the complete genome analysis of an early methicillin-resistant Staphylococcus aureus strain and a biofilm-producing methicillin-resistant Staphylococcus epidermidis strain.</title>
        <authorList>
            <person name="Gill S.R."/>
            <person name="Fouts D.E."/>
            <person name="Archer G.L."/>
            <person name="Mongodin E.F."/>
            <person name="DeBoy R.T."/>
            <person name="Ravel J."/>
            <person name="Paulsen I.T."/>
            <person name="Kolonay J.F."/>
            <person name="Brinkac L.M."/>
            <person name="Beanan M.J."/>
            <person name="Dodson R.J."/>
            <person name="Daugherty S.C."/>
            <person name="Madupu R."/>
            <person name="Angiuoli S.V."/>
            <person name="Durkin A.S."/>
            <person name="Haft D.H."/>
            <person name="Vamathevan J.J."/>
            <person name="Khouri H."/>
            <person name="Utterback T.R."/>
            <person name="Lee C."/>
            <person name="Dimitrov G."/>
            <person name="Jiang L."/>
            <person name="Qin H."/>
            <person name="Weidman J."/>
            <person name="Tran K."/>
            <person name="Kang K.H."/>
            <person name="Hance I.R."/>
            <person name="Nelson K.E."/>
            <person name="Fraser C.M."/>
        </authorList>
    </citation>
    <scope>NUCLEOTIDE SEQUENCE [LARGE SCALE GENOMIC DNA]</scope>
    <source>
        <strain>ATCC 35984 / DSM 28319 / BCRC 17069 / CCUG 31568 / BM 3577 / RP62A</strain>
    </source>
</reference>
<accession>Q5HMD0</accession>
<dbReference type="EC" id="2.5.1.3" evidence="1"/>
<dbReference type="EMBL" id="CP000029">
    <property type="protein sequence ID" value="AAW55076.1"/>
    <property type="status" value="ALT_INIT"/>
    <property type="molecule type" value="Genomic_DNA"/>
</dbReference>
<dbReference type="RefSeq" id="WP_002505076.1">
    <property type="nucleotide sequence ID" value="NC_002976.3"/>
</dbReference>
<dbReference type="SMR" id="Q5HMD0"/>
<dbReference type="STRING" id="176279.SERP1698"/>
<dbReference type="GeneID" id="50018210"/>
<dbReference type="KEGG" id="ser:SERP1698"/>
<dbReference type="eggNOG" id="COG0352">
    <property type="taxonomic scope" value="Bacteria"/>
</dbReference>
<dbReference type="HOGENOM" id="CLU_018272_3_2_9"/>
<dbReference type="UniPathway" id="UPA00060">
    <property type="reaction ID" value="UER00141"/>
</dbReference>
<dbReference type="Proteomes" id="UP000000531">
    <property type="component" value="Chromosome"/>
</dbReference>
<dbReference type="GO" id="GO:0005737">
    <property type="term" value="C:cytoplasm"/>
    <property type="evidence" value="ECO:0007669"/>
    <property type="project" value="TreeGrafter"/>
</dbReference>
<dbReference type="GO" id="GO:0000287">
    <property type="term" value="F:magnesium ion binding"/>
    <property type="evidence" value="ECO:0007669"/>
    <property type="project" value="UniProtKB-UniRule"/>
</dbReference>
<dbReference type="GO" id="GO:0004789">
    <property type="term" value="F:thiamine-phosphate diphosphorylase activity"/>
    <property type="evidence" value="ECO:0007669"/>
    <property type="project" value="UniProtKB-UniRule"/>
</dbReference>
<dbReference type="GO" id="GO:0009228">
    <property type="term" value="P:thiamine biosynthetic process"/>
    <property type="evidence" value="ECO:0007669"/>
    <property type="project" value="UniProtKB-KW"/>
</dbReference>
<dbReference type="GO" id="GO:0009229">
    <property type="term" value="P:thiamine diphosphate biosynthetic process"/>
    <property type="evidence" value="ECO:0007669"/>
    <property type="project" value="UniProtKB-UniRule"/>
</dbReference>
<dbReference type="CDD" id="cd00564">
    <property type="entry name" value="TMP_TenI"/>
    <property type="match status" value="1"/>
</dbReference>
<dbReference type="FunFam" id="3.20.20.70:FF:000096">
    <property type="entry name" value="Thiamine-phosphate synthase"/>
    <property type="match status" value="1"/>
</dbReference>
<dbReference type="Gene3D" id="3.20.20.70">
    <property type="entry name" value="Aldolase class I"/>
    <property type="match status" value="1"/>
</dbReference>
<dbReference type="HAMAP" id="MF_00097">
    <property type="entry name" value="TMP_synthase"/>
    <property type="match status" value="1"/>
</dbReference>
<dbReference type="InterPro" id="IPR013785">
    <property type="entry name" value="Aldolase_TIM"/>
</dbReference>
<dbReference type="InterPro" id="IPR036206">
    <property type="entry name" value="ThiamineP_synth_sf"/>
</dbReference>
<dbReference type="InterPro" id="IPR022998">
    <property type="entry name" value="ThiamineP_synth_TenI"/>
</dbReference>
<dbReference type="InterPro" id="IPR034291">
    <property type="entry name" value="TMP_synthase"/>
</dbReference>
<dbReference type="NCBIfam" id="TIGR00693">
    <property type="entry name" value="thiE"/>
    <property type="match status" value="1"/>
</dbReference>
<dbReference type="PANTHER" id="PTHR20857">
    <property type="entry name" value="THIAMINE-PHOSPHATE PYROPHOSPHORYLASE"/>
    <property type="match status" value="1"/>
</dbReference>
<dbReference type="PANTHER" id="PTHR20857:SF15">
    <property type="entry name" value="THIAMINE-PHOSPHATE SYNTHASE"/>
    <property type="match status" value="1"/>
</dbReference>
<dbReference type="Pfam" id="PF02581">
    <property type="entry name" value="TMP-TENI"/>
    <property type="match status" value="1"/>
</dbReference>
<dbReference type="SUPFAM" id="SSF51391">
    <property type="entry name" value="Thiamin phosphate synthase"/>
    <property type="match status" value="1"/>
</dbReference>
<keyword id="KW-0460">Magnesium</keyword>
<keyword id="KW-0479">Metal-binding</keyword>
<keyword id="KW-1185">Reference proteome</keyword>
<keyword id="KW-0784">Thiamine biosynthesis</keyword>
<keyword id="KW-0808">Transferase</keyword>